<protein>
    <recommendedName>
        <fullName evidence="4">Glutamate [NMDA] receptor subunit 1</fullName>
    </recommendedName>
</protein>
<organism>
    <name type="scientific">Drosophila simulans</name>
    <name type="common">Fruit fly</name>
    <dbReference type="NCBI Taxonomy" id="7240"/>
    <lineage>
        <taxon>Eukaryota</taxon>
        <taxon>Metazoa</taxon>
        <taxon>Ecdysozoa</taxon>
        <taxon>Arthropoda</taxon>
        <taxon>Hexapoda</taxon>
        <taxon>Insecta</taxon>
        <taxon>Pterygota</taxon>
        <taxon>Neoptera</taxon>
        <taxon>Endopterygota</taxon>
        <taxon>Diptera</taxon>
        <taxon>Brachycera</taxon>
        <taxon>Muscomorpha</taxon>
        <taxon>Ephydroidea</taxon>
        <taxon>Drosophilidae</taxon>
        <taxon>Drosophila</taxon>
        <taxon>Sophophora</taxon>
    </lineage>
</organism>
<reference evidence="8" key="1">
    <citation type="journal article" date="2007" name="Nature">
        <title>Evolution of genes and genomes on the Drosophila phylogeny.</title>
        <authorList>
            <consortium name="Drosophila 12 genomes consortium"/>
        </authorList>
    </citation>
    <scope>NUCLEOTIDE SEQUENCE [LARGE SCALE GENOMIC DNA]</scope>
</reference>
<sequence length="997" mass="112143">MAVAGFVFCRPLFGLAIVLLVAPIDAAQRHTASDNPSTYNIGGVLSNSDSEEHFSTTIKHLNFDQQYVPRKVTYYDKTIRMDKNPIKTVFNVCDKLIENRVYAVVVSHEQTSGDLSPAAVSYTSGFYSIPVIGISSRDAAFSDKNIHVSFLRTVPPYYHQADVWLEMLSHFAYTKVIIIHSSDTDGRAILGRFQTTSQTYYDDVDVRATVELIVEFEPKLESFTEHLIDMKTAQSRVYLMYASTEDAQVIFRDAGEYNMTGEGHVWIVTEQALFSNNTPDGVLGLQLEHAHSDKGHIRDSVYVLASAIKEMISNETIAEAPKDCGDSAVNWESGKRLFQYLKSRNITGETGQVAFDDNGDRIYAGYDVINIREQQKKHVVGKFSYDSMRAKMRMRINDSEIIWPGKQRRKPEGIMIPTHLKLLTIEEKPFVYVRRMGDDEFRCEPDERPCPLFNNSDATANEFCCRGYCIDLLIELSKRINFTYDLALSPDGQFGHYILRNSTGAMTLRKEWTGLIGELVNERADMIVAPLTINPERAEYIEFSKPFKYQGITILEKKPSRSSTLVSFLQPFSNTLWILVMVSVHVVALVLYLLDRFSPFGRFKLSHSDSNEEKALNLSSAVWFAWGVLLNSGIGEGTPRSFSARVLGMVWAGFAMIIVASYTANLAAFLVLERPKTKLSGINDARLRNTMENLTCATVKGSSVDMYFRRQVELSNMYRTMEANNYATAEQAIQDVKKGKLMAFIWDSSRLEYEASKDCELVTAGELFGRSGYGIGLQKGSPWTDAVTLAILEFHESGFMEKLDKQWIFHGHVQQNCELFEKTPNTLGLKNMAGVFILVGVGIAGGVGLIIIEVIYKKHQVKKQKRLDIARHAADKWRGTIEKRKTIRASLAMQRQYNVGLNSTHAPGTISLAVDKRRYPRLGQRLGPERAWPGDAADVLRIRRPYELGKPGQSPKVMAANQPGMPMPMLGKTRPQQSVLPPRYSPGYTSDVSHLVV</sequence>
<feature type="signal peptide" evidence="5">
    <location>
        <begin position="1"/>
        <end position="26"/>
    </location>
</feature>
<feature type="chain" id="PRO_0000364001" description="Glutamate [NMDA] receptor subunit 1" evidence="5">
    <location>
        <begin position="27"/>
        <end position="997"/>
    </location>
</feature>
<feature type="topological domain" description="Extracellular" evidence="5">
    <location>
        <begin position="27"/>
        <end position="573"/>
    </location>
</feature>
<feature type="transmembrane region" description="Helical" evidence="5">
    <location>
        <begin position="574"/>
        <end position="594"/>
    </location>
</feature>
<feature type="topological domain" description="Cytoplasmic" evidence="5">
    <location>
        <begin position="595"/>
        <end position="651"/>
    </location>
</feature>
<feature type="transmembrane region" description="Helical" evidence="5">
    <location>
        <begin position="652"/>
        <end position="672"/>
    </location>
</feature>
<feature type="topological domain" description="Extracellular" evidence="5">
    <location>
        <begin position="673"/>
        <end position="831"/>
    </location>
</feature>
<feature type="transmembrane region" description="Helical" evidence="5">
    <location>
        <begin position="832"/>
        <end position="852"/>
    </location>
</feature>
<feature type="topological domain" description="Cytoplasmic" evidence="5">
    <location>
        <begin position="853"/>
        <end position="997"/>
    </location>
</feature>
<feature type="region of interest" description="Disordered" evidence="6">
    <location>
        <begin position="970"/>
        <end position="997"/>
    </location>
</feature>
<feature type="compositionally biased region" description="Polar residues" evidence="6">
    <location>
        <begin position="987"/>
        <end position="997"/>
    </location>
</feature>
<feature type="binding site" evidence="2">
    <location>
        <begin position="530"/>
        <end position="532"/>
    </location>
    <ligand>
        <name>glycine</name>
        <dbReference type="ChEBI" id="CHEBI:57305"/>
    </ligand>
</feature>
<feature type="binding site" evidence="2">
    <location>
        <position position="537"/>
    </location>
    <ligand>
        <name>glycine</name>
        <dbReference type="ChEBI" id="CHEBI:57305"/>
    </ligand>
</feature>
<feature type="binding site" evidence="2">
    <location>
        <position position="703"/>
    </location>
    <ligand>
        <name>glycine</name>
        <dbReference type="ChEBI" id="CHEBI:57305"/>
    </ligand>
</feature>
<feature type="binding site" evidence="2">
    <location>
        <position position="747"/>
    </location>
    <ligand>
        <name>glycine</name>
        <dbReference type="ChEBI" id="CHEBI:57305"/>
    </ligand>
</feature>
<feature type="glycosylation site" description="N-linked (GlcNAc...) asparagine" evidence="5">
    <location>
        <position position="258"/>
    </location>
</feature>
<feature type="glycosylation site" description="N-linked (GlcNAc...) asparagine" evidence="5">
    <location>
        <position position="314"/>
    </location>
</feature>
<feature type="glycosylation site" description="N-linked (GlcNAc...) asparagine" evidence="5">
    <location>
        <position position="345"/>
    </location>
</feature>
<feature type="glycosylation site" description="N-linked (GlcNAc...) asparagine" evidence="5">
    <location>
        <position position="397"/>
    </location>
</feature>
<feature type="glycosylation site" description="N-linked (GlcNAc...) asparagine" evidence="5">
    <location>
        <position position="454"/>
    </location>
</feature>
<feature type="glycosylation site" description="N-linked (GlcNAc...) asparagine" evidence="5">
    <location>
        <position position="481"/>
    </location>
</feature>
<feature type="glycosylation site" description="N-linked (GlcNAc...) asparagine" evidence="5">
    <location>
        <position position="501"/>
    </location>
</feature>
<feature type="glycosylation site" description="N-linked (GlcNAc...) asparagine" evidence="5">
    <location>
        <position position="693"/>
    </location>
</feature>
<feature type="disulfide bond" description="Interchain" evidence="3">
    <location>
        <position position="93"/>
    </location>
</feature>
<comment type="function">
    <text evidence="2 4">NMDA receptor subtype of glutamate-gated ion channels with high calcium permeability and voltage-dependent sensitivity to magnesium. Mediated by glycine. This protein plays a key role in synaptic plasticity, synaptogenesis, excitotoxicity, memory acquisition and learning. It mediates neuronal functions in glutamate neurotransmission. Is involved in the cell surface targeting of NMDA receptors. Plays a role in associative learning and in long-term memory consolidation (By similarity).</text>
</comment>
<comment type="subunit">
    <text evidence="1">Forms a heteromeric NMDA channel with Nmdar2.</text>
</comment>
<comment type="subcellular location">
    <subcellularLocation>
        <location evidence="4">Cell membrane</location>
        <topology evidence="4">Multi-pass membrane protein</topology>
    </subcellularLocation>
    <subcellularLocation>
        <location evidence="4">Postsynaptic cell membrane</location>
    </subcellularLocation>
    <subcellularLocation>
        <location evidence="4">Postsynaptic density</location>
    </subcellularLocation>
</comment>
<comment type="similarity">
    <text evidence="7">Belongs to the glutamate-gated ion channel (TC 1.A.10.1) family.</text>
</comment>
<proteinExistence type="inferred from homology"/>
<evidence type="ECO:0000250" key="1"/>
<evidence type="ECO:0000250" key="2">
    <source>
        <dbReference type="UniProtKB" id="P35439"/>
    </source>
</evidence>
<evidence type="ECO:0000250" key="3">
    <source>
        <dbReference type="UniProtKB" id="Q05586"/>
    </source>
</evidence>
<evidence type="ECO:0000250" key="4">
    <source>
        <dbReference type="UniProtKB" id="Q24418"/>
    </source>
</evidence>
<evidence type="ECO:0000255" key="5"/>
<evidence type="ECO:0000256" key="6">
    <source>
        <dbReference type="SAM" id="MobiDB-lite"/>
    </source>
</evidence>
<evidence type="ECO:0000305" key="7"/>
<evidence type="ECO:0000312" key="8">
    <source>
        <dbReference type="EMBL" id="EDX11729.1"/>
    </source>
</evidence>
<gene>
    <name evidence="4" type="primary">Nmdar1</name>
    <name type="ORF">GD19612</name>
</gene>
<name>NMDA1_DROSI</name>
<accession>B4QWW7</accession>
<dbReference type="EMBL" id="CM000364">
    <property type="protein sequence ID" value="EDX11729.1"/>
    <property type="molecule type" value="Genomic_DNA"/>
</dbReference>
<dbReference type="SMR" id="B4QWW7"/>
<dbReference type="STRING" id="7240.B4QWW7"/>
<dbReference type="GlyCosmos" id="B4QWW7">
    <property type="glycosylation" value="8 sites, No reported glycans"/>
</dbReference>
<dbReference type="EnsemblMetazoa" id="FBtr0219522">
    <property type="protein sequence ID" value="FBpp0218014"/>
    <property type="gene ID" value="FBgn0191104"/>
</dbReference>
<dbReference type="EnsemblMetazoa" id="XM_016175954.2">
    <property type="protein sequence ID" value="XP_016033321.1"/>
    <property type="gene ID" value="LOC6726819"/>
</dbReference>
<dbReference type="GeneID" id="6726819"/>
<dbReference type="KEGG" id="dsi:Dsimw501_GD19612"/>
<dbReference type="CTD" id="40665"/>
<dbReference type="HOGENOM" id="CLU_007257_2_0_1"/>
<dbReference type="OMA" id="FANNTPD"/>
<dbReference type="OrthoDB" id="5984008at2759"/>
<dbReference type="PhylomeDB" id="B4QWW7"/>
<dbReference type="Proteomes" id="UP000000304">
    <property type="component" value="Chromosome 3R"/>
</dbReference>
<dbReference type="Bgee" id="FBgn0191104">
    <property type="expression patterns" value="Expressed in adult organism"/>
</dbReference>
<dbReference type="GO" id="GO:0017146">
    <property type="term" value="C:NMDA selective glutamate receptor complex"/>
    <property type="evidence" value="ECO:0000250"/>
    <property type="project" value="UniProtKB"/>
</dbReference>
<dbReference type="GO" id="GO:0014069">
    <property type="term" value="C:postsynaptic density"/>
    <property type="evidence" value="ECO:0007669"/>
    <property type="project" value="UniProtKB-SubCell"/>
</dbReference>
<dbReference type="GO" id="GO:0045211">
    <property type="term" value="C:postsynaptic membrane"/>
    <property type="evidence" value="ECO:0000250"/>
    <property type="project" value="UniProtKB"/>
</dbReference>
<dbReference type="GO" id="GO:0004970">
    <property type="term" value="F:glutamate-gated receptor activity"/>
    <property type="evidence" value="ECO:0000250"/>
    <property type="project" value="UniProtKB"/>
</dbReference>
<dbReference type="GO" id="GO:0004972">
    <property type="term" value="F:NMDA glutamate receptor activity"/>
    <property type="evidence" value="ECO:0007669"/>
    <property type="project" value="EnsemblMetazoa"/>
</dbReference>
<dbReference type="GO" id="GO:0048149">
    <property type="term" value="P:behavioral response to ethanol"/>
    <property type="evidence" value="ECO:0007669"/>
    <property type="project" value="EnsemblMetazoa"/>
</dbReference>
<dbReference type="GO" id="GO:0055074">
    <property type="term" value="P:calcium ion homeostasis"/>
    <property type="evidence" value="ECO:0000250"/>
    <property type="project" value="UniProtKB"/>
</dbReference>
<dbReference type="GO" id="GO:0007268">
    <property type="term" value="P:chemical synaptic transmission"/>
    <property type="evidence" value="ECO:0000250"/>
    <property type="project" value="UniProtKB"/>
</dbReference>
<dbReference type="GO" id="GO:0035235">
    <property type="term" value="P:ionotropic glutamate receptor signaling pathway"/>
    <property type="evidence" value="ECO:0000250"/>
    <property type="project" value="UniProtKB"/>
</dbReference>
<dbReference type="GO" id="GO:0007616">
    <property type="term" value="P:long-term memory"/>
    <property type="evidence" value="ECO:0000250"/>
    <property type="project" value="UniProtKB"/>
</dbReference>
<dbReference type="GO" id="GO:0072375">
    <property type="term" value="P:medium-term memory"/>
    <property type="evidence" value="ECO:0007669"/>
    <property type="project" value="EnsemblMetazoa"/>
</dbReference>
<dbReference type="GO" id="GO:0008355">
    <property type="term" value="P:olfactory learning"/>
    <property type="evidence" value="ECO:0000250"/>
    <property type="project" value="UniProtKB"/>
</dbReference>
<dbReference type="GO" id="GO:0042331">
    <property type="term" value="P:phototaxis"/>
    <property type="evidence" value="ECO:0007669"/>
    <property type="project" value="EnsemblMetazoa"/>
</dbReference>
<dbReference type="GO" id="GO:0042391">
    <property type="term" value="P:regulation of membrane potential"/>
    <property type="evidence" value="ECO:0000250"/>
    <property type="project" value="UniProtKB"/>
</dbReference>
<dbReference type="GO" id="GO:0050975">
    <property type="term" value="P:sensory perception of touch"/>
    <property type="evidence" value="ECO:0007669"/>
    <property type="project" value="EnsemblMetazoa"/>
</dbReference>
<dbReference type="CDD" id="cd06379">
    <property type="entry name" value="PBP1_iGluR_NMDA_NR1"/>
    <property type="match status" value="1"/>
</dbReference>
<dbReference type="CDD" id="cd13719">
    <property type="entry name" value="PBP2_iGluR_NMDA_Nr1"/>
    <property type="match status" value="1"/>
</dbReference>
<dbReference type="FunFam" id="3.40.190.10:FF:000177">
    <property type="entry name" value="Glutamate [NMDA] receptor subunit 1"/>
    <property type="match status" value="1"/>
</dbReference>
<dbReference type="FunFam" id="3.40.50.2300:FF:000266">
    <property type="entry name" value="Glutamate [NMDA] receptor subunit 1"/>
    <property type="match status" value="1"/>
</dbReference>
<dbReference type="FunFam" id="3.40.190.10:FF:000010">
    <property type="entry name" value="glutamate receptor ionotropic, NMDA 1 isoform X1"/>
    <property type="match status" value="1"/>
</dbReference>
<dbReference type="FunFam" id="3.40.50.2300:FF:000025">
    <property type="entry name" value="glutamate receptor ionotropic, NMDA 1 isoform X1"/>
    <property type="match status" value="1"/>
</dbReference>
<dbReference type="Gene3D" id="1.10.287.70">
    <property type="match status" value="1"/>
</dbReference>
<dbReference type="Gene3D" id="3.40.50.2300">
    <property type="match status" value="2"/>
</dbReference>
<dbReference type="Gene3D" id="3.40.190.10">
    <property type="entry name" value="Periplasmic binding protein-like II"/>
    <property type="match status" value="2"/>
</dbReference>
<dbReference type="InterPro" id="IPR001828">
    <property type="entry name" value="ANF_lig-bd_rcpt"/>
</dbReference>
<dbReference type="InterPro" id="IPR018882">
    <property type="entry name" value="CaM-bd_C0_NMDA_rcpt_NR1"/>
</dbReference>
<dbReference type="InterPro" id="IPR019594">
    <property type="entry name" value="Glu/Gly-bd"/>
</dbReference>
<dbReference type="InterPro" id="IPR001508">
    <property type="entry name" value="Iono_Glu_rcpt_met"/>
</dbReference>
<dbReference type="InterPro" id="IPR015683">
    <property type="entry name" value="Ionotropic_Glu_rcpt"/>
</dbReference>
<dbReference type="InterPro" id="IPR001320">
    <property type="entry name" value="Iontro_rcpt_C"/>
</dbReference>
<dbReference type="InterPro" id="IPR049872">
    <property type="entry name" value="NMDA1-like_ligand-bd"/>
</dbReference>
<dbReference type="InterPro" id="IPR049873">
    <property type="entry name" value="NMDA1-like_N"/>
</dbReference>
<dbReference type="InterPro" id="IPR028082">
    <property type="entry name" value="Peripla_BP_I"/>
</dbReference>
<dbReference type="PANTHER" id="PTHR18966">
    <property type="entry name" value="IONOTROPIC GLUTAMATE RECEPTOR"/>
    <property type="match status" value="1"/>
</dbReference>
<dbReference type="Pfam" id="PF01094">
    <property type="entry name" value="ANF_receptor"/>
    <property type="match status" value="1"/>
</dbReference>
<dbReference type="Pfam" id="PF10562">
    <property type="entry name" value="CaM_bdg_C0"/>
    <property type="match status" value="1"/>
</dbReference>
<dbReference type="Pfam" id="PF00060">
    <property type="entry name" value="Lig_chan"/>
    <property type="match status" value="1"/>
</dbReference>
<dbReference type="Pfam" id="PF10613">
    <property type="entry name" value="Lig_chan-Glu_bd"/>
    <property type="match status" value="1"/>
</dbReference>
<dbReference type="PRINTS" id="PR00177">
    <property type="entry name" value="NMDARECEPTOR"/>
</dbReference>
<dbReference type="SMART" id="SM00918">
    <property type="entry name" value="Lig_chan-Glu_bd"/>
    <property type="match status" value="1"/>
</dbReference>
<dbReference type="SMART" id="SM00079">
    <property type="entry name" value="PBPe"/>
    <property type="match status" value="1"/>
</dbReference>
<dbReference type="SUPFAM" id="SSF53822">
    <property type="entry name" value="Periplasmic binding protein-like I"/>
    <property type="match status" value="1"/>
</dbReference>
<dbReference type="SUPFAM" id="SSF53850">
    <property type="entry name" value="Periplasmic binding protein-like II"/>
    <property type="match status" value="1"/>
</dbReference>
<dbReference type="SUPFAM" id="SSF81324">
    <property type="entry name" value="Voltage-gated potassium channels"/>
    <property type="match status" value="1"/>
</dbReference>
<keyword id="KW-0106">Calcium</keyword>
<keyword id="KW-1003">Cell membrane</keyword>
<keyword id="KW-1015">Disulfide bond</keyword>
<keyword id="KW-0325">Glycoprotein</keyword>
<keyword id="KW-0407">Ion channel</keyword>
<keyword id="KW-0406">Ion transport</keyword>
<keyword id="KW-1071">Ligand-gated ion channel</keyword>
<keyword id="KW-0460">Magnesium</keyword>
<keyword id="KW-0472">Membrane</keyword>
<keyword id="KW-0597">Phosphoprotein</keyword>
<keyword id="KW-0628">Postsynaptic cell membrane</keyword>
<keyword id="KW-0675">Receptor</keyword>
<keyword id="KW-1185">Reference proteome</keyword>
<keyword id="KW-0732">Signal</keyword>
<keyword id="KW-0770">Synapse</keyword>
<keyword id="KW-0812">Transmembrane</keyword>
<keyword id="KW-1133">Transmembrane helix</keyword>
<keyword id="KW-0813">Transport</keyword>